<organism>
    <name type="scientific">Francisella tularensis</name>
    <dbReference type="NCBI Taxonomy" id="263"/>
    <lineage>
        <taxon>Bacteria</taxon>
        <taxon>Pseudomonadati</taxon>
        <taxon>Pseudomonadota</taxon>
        <taxon>Gammaproteobacteria</taxon>
        <taxon>Thiotrichales</taxon>
        <taxon>Francisellaceae</taxon>
        <taxon>Francisella</taxon>
    </lineage>
</organism>
<reference key="1">
    <citation type="journal article" date="1995" name="Gene">
        <title>Analysis of the DnaK molecular chaperone system of Francisella tularensis.</title>
        <authorList>
            <person name="Zuber M."/>
            <person name="Hoover T.A."/>
            <person name="Dertzbaugh M.T."/>
            <person name="Court D.L."/>
        </authorList>
    </citation>
    <scope>NUCLEOTIDE SEQUENCE [GENOMIC DNA]</scope>
</reference>
<sequence>MGKIIGIDLGTTNSCLAIMDGKTAKVIENAEGHRTTPSVVAYTDSGEILVGQAAKRQAVTNPDNTFFAIKRLIGRKYDDKAVQEDIKKKVPYAVIKADNGDAWVATKEGKKMAPPQVSAEVLRKMKKTAEDYLGEPVTEAVITVPAYFNDSQRQATKDAGKIAGLEVKRIINEPTAAALAYGVDSKKGEQTVAVYDLGGGTFDISIIEISDVDGDNQIEVLSTNGDTFLGGEDFDLALMNYLIDEFKKEQGIDLHNDKLALQRVREAAEKAKVELSPAQQTDVNLPYITADATGPKHLNIKVTRAKFESLVSDLVMRSLEPCKKALEDAGLSKSDITEVLLVGGQTRMPLVQEKVKEFFGKEPRKDVNPDEAVAVGAAIQGGVLAGDVKDVLLLDVTPLSLGIETMGGVMTKLIERNTTIPTKKSQVFSTAEDNQPAVTIHVLQGEREMASANKSLGRFDLADIPPAPRGMPQIEVTFDIDANGILNVSAKDKATGKEQNIVIKSSSGLSEEDIEKMVQDAEANAEADKKFHDLVTARNTADNLIHSSRKAIQELGDKVTAAEKEKIEEACKELEAATKGDDKQAIEAKTKALEEAFAPIAQKAYAEQAQAAGAQGGAKAEEPKKEEDVVDADFEDVEDDKK</sequence>
<evidence type="ECO:0000250" key="1"/>
<evidence type="ECO:0000256" key="2">
    <source>
        <dbReference type="SAM" id="MobiDB-lite"/>
    </source>
</evidence>
<evidence type="ECO:0000305" key="3"/>
<name>DNAK_FRATU</name>
<dbReference type="EMBL" id="L43367">
    <property type="protein sequence ID" value="AAA69561.1"/>
    <property type="molecule type" value="Genomic_DNA"/>
</dbReference>
<dbReference type="SMR" id="P48205"/>
<dbReference type="GO" id="GO:0005524">
    <property type="term" value="F:ATP binding"/>
    <property type="evidence" value="ECO:0007669"/>
    <property type="project" value="UniProtKB-UniRule"/>
</dbReference>
<dbReference type="GO" id="GO:0140662">
    <property type="term" value="F:ATP-dependent protein folding chaperone"/>
    <property type="evidence" value="ECO:0007669"/>
    <property type="project" value="InterPro"/>
</dbReference>
<dbReference type="GO" id="GO:0051082">
    <property type="term" value="F:unfolded protein binding"/>
    <property type="evidence" value="ECO:0007669"/>
    <property type="project" value="InterPro"/>
</dbReference>
<dbReference type="CDD" id="cd10234">
    <property type="entry name" value="ASKHA_NBD_HSP70_DnaK-like"/>
    <property type="match status" value="1"/>
</dbReference>
<dbReference type="FunFam" id="2.60.34.10:FF:000014">
    <property type="entry name" value="Chaperone protein DnaK HSP70"/>
    <property type="match status" value="1"/>
</dbReference>
<dbReference type="FunFam" id="3.30.30.30:FF:000003">
    <property type="entry name" value="Heat shock protein 9"/>
    <property type="match status" value="1"/>
</dbReference>
<dbReference type="FunFam" id="1.20.1270.10:FF:000001">
    <property type="entry name" value="Molecular chaperone DnaK"/>
    <property type="match status" value="1"/>
</dbReference>
<dbReference type="FunFam" id="3.30.420.40:FF:000004">
    <property type="entry name" value="Molecular chaperone DnaK"/>
    <property type="match status" value="1"/>
</dbReference>
<dbReference type="FunFam" id="3.90.640.10:FF:000003">
    <property type="entry name" value="Molecular chaperone DnaK"/>
    <property type="match status" value="1"/>
</dbReference>
<dbReference type="Gene3D" id="1.20.1270.10">
    <property type="match status" value="1"/>
</dbReference>
<dbReference type="Gene3D" id="3.30.420.40">
    <property type="match status" value="2"/>
</dbReference>
<dbReference type="Gene3D" id="3.90.640.10">
    <property type="entry name" value="Actin, Chain A, domain 4"/>
    <property type="match status" value="1"/>
</dbReference>
<dbReference type="Gene3D" id="2.60.34.10">
    <property type="entry name" value="Substrate Binding Domain Of DNAk, Chain A, domain 1"/>
    <property type="match status" value="1"/>
</dbReference>
<dbReference type="HAMAP" id="MF_00332">
    <property type="entry name" value="DnaK"/>
    <property type="match status" value="1"/>
</dbReference>
<dbReference type="InterPro" id="IPR043129">
    <property type="entry name" value="ATPase_NBD"/>
</dbReference>
<dbReference type="InterPro" id="IPR012725">
    <property type="entry name" value="Chaperone_DnaK"/>
</dbReference>
<dbReference type="InterPro" id="IPR018181">
    <property type="entry name" value="Heat_shock_70_CS"/>
</dbReference>
<dbReference type="InterPro" id="IPR029048">
    <property type="entry name" value="HSP70_C_sf"/>
</dbReference>
<dbReference type="InterPro" id="IPR029047">
    <property type="entry name" value="HSP70_peptide-bd_sf"/>
</dbReference>
<dbReference type="InterPro" id="IPR013126">
    <property type="entry name" value="Hsp_70_fam"/>
</dbReference>
<dbReference type="NCBIfam" id="NF001413">
    <property type="entry name" value="PRK00290.1"/>
    <property type="match status" value="1"/>
</dbReference>
<dbReference type="NCBIfam" id="NF003520">
    <property type="entry name" value="PRK05183.1"/>
    <property type="match status" value="1"/>
</dbReference>
<dbReference type="NCBIfam" id="TIGR02350">
    <property type="entry name" value="prok_dnaK"/>
    <property type="match status" value="1"/>
</dbReference>
<dbReference type="PANTHER" id="PTHR19375">
    <property type="entry name" value="HEAT SHOCK PROTEIN 70KDA"/>
    <property type="match status" value="1"/>
</dbReference>
<dbReference type="Pfam" id="PF00012">
    <property type="entry name" value="HSP70"/>
    <property type="match status" value="1"/>
</dbReference>
<dbReference type="PRINTS" id="PR00301">
    <property type="entry name" value="HEATSHOCK70"/>
</dbReference>
<dbReference type="SUPFAM" id="SSF53067">
    <property type="entry name" value="Actin-like ATPase domain"/>
    <property type="match status" value="2"/>
</dbReference>
<dbReference type="SUPFAM" id="SSF100934">
    <property type="entry name" value="Heat shock protein 70kD (HSP70), C-terminal subdomain"/>
    <property type="match status" value="1"/>
</dbReference>
<dbReference type="SUPFAM" id="SSF100920">
    <property type="entry name" value="Heat shock protein 70kD (HSP70), peptide-binding domain"/>
    <property type="match status" value="1"/>
</dbReference>
<dbReference type="PROSITE" id="PS00297">
    <property type="entry name" value="HSP70_1"/>
    <property type="match status" value="1"/>
</dbReference>
<dbReference type="PROSITE" id="PS00329">
    <property type="entry name" value="HSP70_2"/>
    <property type="match status" value="1"/>
</dbReference>
<dbReference type="PROSITE" id="PS01036">
    <property type="entry name" value="HSP70_3"/>
    <property type="match status" value="1"/>
</dbReference>
<comment type="function">
    <text evidence="1">Acts as a chaperone.</text>
</comment>
<comment type="induction">
    <text evidence="1">By stress conditions e.g. heat shock (By similarity).</text>
</comment>
<comment type="similarity">
    <text evidence="3">Belongs to the heat shock protein 70 family.</text>
</comment>
<protein>
    <recommendedName>
        <fullName>Chaperone protein DnaK</fullName>
    </recommendedName>
    <alternativeName>
        <fullName>HSP70</fullName>
    </alternativeName>
    <alternativeName>
        <fullName>Heat shock 70 kDa protein</fullName>
    </alternativeName>
    <alternativeName>
        <fullName>Heat shock protein 70</fullName>
    </alternativeName>
</protein>
<proteinExistence type="inferred from homology"/>
<gene>
    <name type="primary">dnaK</name>
</gene>
<accession>P48205</accession>
<keyword id="KW-0067">ATP-binding</keyword>
<keyword id="KW-0143">Chaperone</keyword>
<keyword id="KW-0547">Nucleotide-binding</keyword>
<keyword id="KW-0597">Phosphoprotein</keyword>
<keyword id="KW-0346">Stress response</keyword>
<feature type="chain" id="PRO_0000078464" description="Chaperone protein DnaK">
    <location>
        <begin position="1"/>
        <end position="642"/>
    </location>
</feature>
<feature type="region of interest" description="Disordered" evidence="2">
    <location>
        <begin position="609"/>
        <end position="642"/>
    </location>
</feature>
<feature type="compositionally biased region" description="Acidic residues" evidence="2">
    <location>
        <begin position="628"/>
        <end position="642"/>
    </location>
</feature>
<feature type="modified residue" description="Phosphothreonine; by autocatalysis" evidence="1">
    <location>
        <position position="201"/>
    </location>
</feature>